<accession>Q4L700</accession>
<sequence>MRIKSMAKSELPRERLIHNGAKSLSNSELLAILINTGRHGFSSLDIANELLISFNGLKELKHLSINDLTTIKGIGLYKAVILKAAFELGERMYARDFNEKIKITSPSDVSNIMMSKMKDLTQEHFVVLLLNSKNIVIKEETIYKGTLNSSVIHPREVFKAAIRASSNAIIVLHNHPSGDVTPSKEDIETTIRLKECGELLGIQVLDHIIIGDQKYASLVEEGYFDLRN</sequence>
<keyword id="KW-0378">Hydrolase</keyword>
<keyword id="KW-0479">Metal-binding</keyword>
<keyword id="KW-0482">Metalloprotease</keyword>
<keyword id="KW-0645">Protease</keyword>
<keyword id="KW-0862">Zinc</keyword>
<feature type="chain" id="PRO_1000001699" description="UPF0758 protein SH1266">
    <location>
        <begin position="1"/>
        <end position="228"/>
    </location>
</feature>
<feature type="domain" description="MPN" evidence="1">
    <location>
        <begin position="102"/>
        <end position="224"/>
    </location>
</feature>
<feature type="short sequence motif" description="JAMM motif" evidence="1">
    <location>
        <begin position="173"/>
        <end position="186"/>
    </location>
</feature>
<feature type="binding site" evidence="1">
    <location>
        <position position="173"/>
    </location>
    <ligand>
        <name>Zn(2+)</name>
        <dbReference type="ChEBI" id="CHEBI:29105"/>
        <note>catalytic</note>
    </ligand>
</feature>
<feature type="binding site" evidence="1">
    <location>
        <position position="175"/>
    </location>
    <ligand>
        <name>Zn(2+)</name>
        <dbReference type="ChEBI" id="CHEBI:29105"/>
        <note>catalytic</note>
    </ligand>
</feature>
<feature type="binding site" evidence="1">
    <location>
        <position position="186"/>
    </location>
    <ligand>
        <name>Zn(2+)</name>
        <dbReference type="ChEBI" id="CHEBI:29105"/>
        <note>catalytic</note>
    </ligand>
</feature>
<protein>
    <recommendedName>
        <fullName>UPF0758 protein SH1266</fullName>
    </recommendedName>
</protein>
<name>Y1266_STAHJ</name>
<comment type="similarity">
    <text evidence="2">Belongs to the UPF0758 family.</text>
</comment>
<evidence type="ECO:0000255" key="1">
    <source>
        <dbReference type="PROSITE-ProRule" id="PRU01182"/>
    </source>
</evidence>
<evidence type="ECO:0000305" key="2"/>
<dbReference type="EMBL" id="AP006716">
    <property type="protein sequence ID" value="BAE04575.1"/>
    <property type="molecule type" value="Genomic_DNA"/>
</dbReference>
<dbReference type="SMR" id="Q4L700"/>
<dbReference type="KEGG" id="sha:SH1266"/>
<dbReference type="eggNOG" id="COG2003">
    <property type="taxonomic scope" value="Bacteria"/>
</dbReference>
<dbReference type="HOGENOM" id="CLU_073529_0_2_9"/>
<dbReference type="OrthoDB" id="9804482at2"/>
<dbReference type="Proteomes" id="UP000000543">
    <property type="component" value="Chromosome"/>
</dbReference>
<dbReference type="GO" id="GO:0046872">
    <property type="term" value="F:metal ion binding"/>
    <property type="evidence" value="ECO:0007669"/>
    <property type="project" value="UniProtKB-KW"/>
</dbReference>
<dbReference type="GO" id="GO:0008237">
    <property type="term" value="F:metallopeptidase activity"/>
    <property type="evidence" value="ECO:0007669"/>
    <property type="project" value="UniProtKB-KW"/>
</dbReference>
<dbReference type="GO" id="GO:0006508">
    <property type="term" value="P:proteolysis"/>
    <property type="evidence" value="ECO:0007669"/>
    <property type="project" value="UniProtKB-KW"/>
</dbReference>
<dbReference type="CDD" id="cd08071">
    <property type="entry name" value="MPN_DUF2466"/>
    <property type="match status" value="1"/>
</dbReference>
<dbReference type="Gene3D" id="3.40.140.10">
    <property type="entry name" value="Cytidine Deaminase, domain 2"/>
    <property type="match status" value="1"/>
</dbReference>
<dbReference type="InterPro" id="IPR037518">
    <property type="entry name" value="MPN"/>
</dbReference>
<dbReference type="InterPro" id="IPR025657">
    <property type="entry name" value="RadC_JAB"/>
</dbReference>
<dbReference type="InterPro" id="IPR010994">
    <property type="entry name" value="RuvA_2-like"/>
</dbReference>
<dbReference type="InterPro" id="IPR001405">
    <property type="entry name" value="UPF0758"/>
</dbReference>
<dbReference type="InterPro" id="IPR020891">
    <property type="entry name" value="UPF0758_CS"/>
</dbReference>
<dbReference type="InterPro" id="IPR046778">
    <property type="entry name" value="UPF0758_N"/>
</dbReference>
<dbReference type="NCBIfam" id="NF000642">
    <property type="entry name" value="PRK00024.1"/>
    <property type="match status" value="1"/>
</dbReference>
<dbReference type="NCBIfam" id="TIGR00608">
    <property type="entry name" value="radc"/>
    <property type="match status" value="1"/>
</dbReference>
<dbReference type="PANTHER" id="PTHR30471">
    <property type="entry name" value="DNA REPAIR PROTEIN RADC"/>
    <property type="match status" value="1"/>
</dbReference>
<dbReference type="PANTHER" id="PTHR30471:SF3">
    <property type="entry name" value="UPF0758 PROTEIN YEES-RELATED"/>
    <property type="match status" value="1"/>
</dbReference>
<dbReference type="Pfam" id="PF04002">
    <property type="entry name" value="RadC"/>
    <property type="match status" value="1"/>
</dbReference>
<dbReference type="Pfam" id="PF20582">
    <property type="entry name" value="UPF0758_N"/>
    <property type="match status" value="1"/>
</dbReference>
<dbReference type="SUPFAM" id="SSF102712">
    <property type="entry name" value="JAB1/MPN domain"/>
    <property type="match status" value="1"/>
</dbReference>
<dbReference type="SUPFAM" id="SSF47781">
    <property type="entry name" value="RuvA domain 2-like"/>
    <property type="match status" value="1"/>
</dbReference>
<dbReference type="PROSITE" id="PS50249">
    <property type="entry name" value="MPN"/>
    <property type="match status" value="1"/>
</dbReference>
<dbReference type="PROSITE" id="PS01302">
    <property type="entry name" value="UPF0758"/>
    <property type="match status" value="1"/>
</dbReference>
<organism>
    <name type="scientific">Staphylococcus haemolyticus (strain JCSC1435)</name>
    <dbReference type="NCBI Taxonomy" id="279808"/>
    <lineage>
        <taxon>Bacteria</taxon>
        <taxon>Bacillati</taxon>
        <taxon>Bacillota</taxon>
        <taxon>Bacilli</taxon>
        <taxon>Bacillales</taxon>
        <taxon>Staphylococcaceae</taxon>
        <taxon>Staphylococcus</taxon>
    </lineage>
</organism>
<proteinExistence type="inferred from homology"/>
<gene>
    <name type="ordered locus">SH1266</name>
</gene>
<reference key="1">
    <citation type="journal article" date="2005" name="J. Bacteriol.">
        <title>Whole-genome sequencing of Staphylococcus haemolyticus uncovers the extreme plasticity of its genome and the evolution of human-colonizing staphylococcal species.</title>
        <authorList>
            <person name="Takeuchi F."/>
            <person name="Watanabe S."/>
            <person name="Baba T."/>
            <person name="Yuzawa H."/>
            <person name="Ito T."/>
            <person name="Morimoto Y."/>
            <person name="Kuroda M."/>
            <person name="Cui L."/>
            <person name="Takahashi M."/>
            <person name="Ankai A."/>
            <person name="Baba S."/>
            <person name="Fukui S."/>
            <person name="Lee J.C."/>
            <person name="Hiramatsu K."/>
        </authorList>
    </citation>
    <scope>NUCLEOTIDE SEQUENCE [LARGE SCALE GENOMIC DNA]</scope>
    <source>
        <strain>JCSC1435</strain>
    </source>
</reference>